<protein>
    <recommendedName>
        <fullName evidence="1">Cytochrome b6-f complex subunit 5</fullName>
    </recommendedName>
    <alternativeName>
        <fullName evidence="1">Cytochrome b6-f complex subunit PetG</fullName>
    </alternativeName>
    <alternativeName>
        <fullName evidence="1">Cytochrome b6-f complex subunit V</fullName>
    </alternativeName>
</protein>
<feature type="chain" id="PRO_0000355388" description="Cytochrome b6-f complex subunit 5">
    <location>
        <begin position="1"/>
        <end position="37"/>
    </location>
</feature>
<feature type="transmembrane region" description="Helical" evidence="1">
    <location>
        <begin position="5"/>
        <end position="25"/>
    </location>
</feature>
<dbReference type="EMBL" id="AB295916">
    <property type="protein sequence ID" value="BAF64865.1"/>
    <property type="molecule type" value="Genomic_DNA"/>
</dbReference>
<dbReference type="EMBL" id="AP009569">
    <property type="protein sequence ID" value="BAH11275.1"/>
    <property type="molecule type" value="Genomic_DNA"/>
</dbReference>
<dbReference type="RefSeq" id="YP_002519764.1">
    <property type="nucleotide sequence ID" value="NC_011942.1"/>
</dbReference>
<dbReference type="SMR" id="A6BM20"/>
<dbReference type="GeneID" id="7368113"/>
<dbReference type="GO" id="GO:0009535">
    <property type="term" value="C:chloroplast thylakoid membrane"/>
    <property type="evidence" value="ECO:0007669"/>
    <property type="project" value="UniProtKB-SubCell"/>
</dbReference>
<dbReference type="GO" id="GO:0009512">
    <property type="term" value="C:cytochrome b6f complex"/>
    <property type="evidence" value="ECO:0007669"/>
    <property type="project" value="InterPro"/>
</dbReference>
<dbReference type="GO" id="GO:0045158">
    <property type="term" value="F:electron transporter, transferring electrons within cytochrome b6/f complex of photosystem II activity"/>
    <property type="evidence" value="ECO:0007669"/>
    <property type="project" value="UniProtKB-UniRule"/>
</dbReference>
<dbReference type="GO" id="GO:0017004">
    <property type="term" value="P:cytochrome complex assembly"/>
    <property type="evidence" value="ECO:0007669"/>
    <property type="project" value="UniProtKB-UniRule"/>
</dbReference>
<dbReference type="GO" id="GO:0015979">
    <property type="term" value="P:photosynthesis"/>
    <property type="evidence" value="ECO:0007669"/>
    <property type="project" value="UniProtKB-KW"/>
</dbReference>
<dbReference type="HAMAP" id="MF_00432">
    <property type="entry name" value="Cytb6_f_PetG"/>
    <property type="match status" value="1"/>
</dbReference>
<dbReference type="InterPro" id="IPR003683">
    <property type="entry name" value="Cyt_6/f_cplx_su5"/>
</dbReference>
<dbReference type="InterPro" id="IPR036099">
    <property type="entry name" value="Cyt_6/f_cplx_su5_sf"/>
</dbReference>
<dbReference type="NCBIfam" id="NF001907">
    <property type="entry name" value="PRK00665.1"/>
    <property type="match status" value="1"/>
</dbReference>
<dbReference type="Pfam" id="PF02529">
    <property type="entry name" value="PetG"/>
    <property type="match status" value="1"/>
</dbReference>
<dbReference type="PIRSF" id="PIRSF000034">
    <property type="entry name" value="Cyt_b6-f_V"/>
    <property type="match status" value="1"/>
</dbReference>
<dbReference type="SUPFAM" id="SSF103446">
    <property type="entry name" value="PetG subunit of the cytochrome b6f complex"/>
    <property type="match status" value="1"/>
</dbReference>
<sequence>MVETLLSGIVLGLVPITLAGLFVTAYLQYRRGDRLDI</sequence>
<geneLocation type="chloroplast"/>
<keyword id="KW-0150">Chloroplast</keyword>
<keyword id="KW-0249">Electron transport</keyword>
<keyword id="KW-0472">Membrane</keyword>
<keyword id="KW-0602">Photosynthesis</keyword>
<keyword id="KW-0934">Plastid</keyword>
<keyword id="KW-0793">Thylakoid</keyword>
<keyword id="KW-0812">Transmembrane</keyword>
<keyword id="KW-1133">Transmembrane helix</keyword>
<keyword id="KW-0813">Transport</keyword>
<proteinExistence type="inferred from homology"/>
<evidence type="ECO:0000255" key="1">
    <source>
        <dbReference type="HAMAP-Rule" id="MF_00432"/>
    </source>
</evidence>
<name>PETG_GNEPA</name>
<accession>A6BM20</accession>
<accession>B7ZI95</accession>
<gene>
    <name evidence="1" type="primary">petG</name>
</gene>
<reference key="1">
    <citation type="journal article" date="2007" name="Mol. Biol. Evol.">
        <title>Chloroplast genome (cpDNA) of Cycas taitungensis and 56 cp protein-coding genes of Gnetum parvifolium: insights into cpDNA evolution and phylogeny of extant seed plants.</title>
        <authorList>
            <person name="Wu C.-S."/>
            <person name="Wang Y.-N."/>
            <person name="Liu S.-M."/>
            <person name="Chaw S.-M."/>
        </authorList>
    </citation>
    <scope>NUCLEOTIDE SEQUENCE [LARGE SCALE GENOMIC DNA]</scope>
</reference>
<reference key="2">
    <citation type="journal article" date="2009" name="Mol. Phylogenet. Evol.">
        <title>Evolution of reduced and compact chloroplast genomes (cpDNAs) in gnetophytes: Selection toward a lower-cost strategy.</title>
        <authorList>
            <person name="Wu C.-S."/>
            <person name="Lai Y.-T."/>
            <person name="Lin C.-P."/>
            <person name="Wang Y.-N."/>
            <person name="Chaw S.-M."/>
        </authorList>
    </citation>
    <scope>NUCLEOTIDE SEQUENCE [LARGE SCALE GENOMIC DNA]</scope>
</reference>
<organism>
    <name type="scientific">Gnetum parvifolium</name>
    <name type="common">Small-leaved jointfir</name>
    <name type="synonym">Gnetum scandens var. parvifolium</name>
    <dbReference type="NCBI Taxonomy" id="33153"/>
    <lineage>
        <taxon>Eukaryota</taxon>
        <taxon>Viridiplantae</taxon>
        <taxon>Streptophyta</taxon>
        <taxon>Embryophyta</taxon>
        <taxon>Tracheophyta</taxon>
        <taxon>Spermatophyta</taxon>
        <taxon>Gnetopsida</taxon>
        <taxon>Gnetidae</taxon>
        <taxon>Gnetales</taxon>
        <taxon>Gnetaceae</taxon>
        <taxon>Gnetum</taxon>
    </lineage>
</organism>
<comment type="function">
    <text evidence="1">Component of the cytochrome b6-f complex, which mediates electron transfer between photosystem II (PSII) and photosystem I (PSI), cyclic electron flow around PSI, and state transitions. PetG is required for either the stability or assembly of the cytochrome b6-f complex.</text>
</comment>
<comment type="subunit">
    <text evidence="1">The 4 large subunits of the cytochrome b6-f complex are cytochrome b6, subunit IV (17 kDa polypeptide, PetD), cytochrome f and the Rieske protein, while the 4 small subunits are PetG, PetL, PetM and PetN. The complex functions as a dimer.</text>
</comment>
<comment type="subcellular location">
    <subcellularLocation>
        <location evidence="1">Plastid</location>
        <location evidence="1">Chloroplast thylakoid membrane</location>
        <topology evidence="1">Single-pass membrane protein</topology>
    </subcellularLocation>
</comment>
<comment type="similarity">
    <text evidence="1">Belongs to the PetG family.</text>
</comment>